<feature type="chain" id="PRO_0000375678" description="Succinyl-diaminopimelate desuccinylase">
    <location>
        <begin position="1"/>
        <end position="383"/>
    </location>
</feature>
<feature type="active site" evidence="1">
    <location>
        <position position="76"/>
    </location>
</feature>
<feature type="active site" description="Proton acceptor" evidence="1">
    <location>
        <position position="141"/>
    </location>
</feature>
<feature type="binding site" evidence="1">
    <location>
        <position position="74"/>
    </location>
    <ligand>
        <name>Zn(2+)</name>
        <dbReference type="ChEBI" id="CHEBI:29105"/>
        <label>1</label>
    </ligand>
</feature>
<feature type="binding site" evidence="1">
    <location>
        <position position="107"/>
    </location>
    <ligand>
        <name>Zn(2+)</name>
        <dbReference type="ChEBI" id="CHEBI:29105"/>
        <label>1</label>
    </ligand>
</feature>
<feature type="binding site" evidence="1">
    <location>
        <position position="107"/>
    </location>
    <ligand>
        <name>Zn(2+)</name>
        <dbReference type="ChEBI" id="CHEBI:29105"/>
        <label>2</label>
    </ligand>
</feature>
<feature type="binding site" evidence="1">
    <location>
        <position position="142"/>
    </location>
    <ligand>
        <name>Zn(2+)</name>
        <dbReference type="ChEBI" id="CHEBI:29105"/>
        <label>2</label>
    </ligand>
</feature>
<feature type="binding site" evidence="1">
    <location>
        <position position="170"/>
    </location>
    <ligand>
        <name>Zn(2+)</name>
        <dbReference type="ChEBI" id="CHEBI:29105"/>
        <label>1</label>
    </ligand>
</feature>
<feature type="binding site" evidence="1">
    <location>
        <position position="356"/>
    </location>
    <ligand>
        <name>Zn(2+)</name>
        <dbReference type="ChEBI" id="CHEBI:29105"/>
        <label>2</label>
    </ligand>
</feature>
<evidence type="ECO:0000255" key="1">
    <source>
        <dbReference type="HAMAP-Rule" id="MF_01690"/>
    </source>
</evidence>
<evidence type="ECO:0000305" key="2"/>
<name>DAPE_RALN1</name>
<gene>
    <name evidence="1" type="primary">dapE</name>
    <name type="ordered locus">RSc1390</name>
</gene>
<organism>
    <name type="scientific">Ralstonia nicotianae (strain ATCC BAA-1114 / GMI1000)</name>
    <name type="common">Ralstonia solanacearum</name>
    <dbReference type="NCBI Taxonomy" id="267608"/>
    <lineage>
        <taxon>Bacteria</taxon>
        <taxon>Pseudomonadati</taxon>
        <taxon>Pseudomonadota</taxon>
        <taxon>Betaproteobacteria</taxon>
        <taxon>Burkholderiales</taxon>
        <taxon>Burkholderiaceae</taxon>
        <taxon>Ralstonia</taxon>
        <taxon>Ralstonia solanacearum species complex</taxon>
    </lineage>
</organism>
<reference key="1">
    <citation type="journal article" date="2002" name="Nature">
        <title>Genome sequence of the plant pathogen Ralstonia solanacearum.</title>
        <authorList>
            <person name="Salanoubat M."/>
            <person name="Genin S."/>
            <person name="Artiguenave F."/>
            <person name="Gouzy J."/>
            <person name="Mangenot S."/>
            <person name="Arlat M."/>
            <person name="Billault A."/>
            <person name="Brottier P."/>
            <person name="Camus J.-C."/>
            <person name="Cattolico L."/>
            <person name="Chandler M."/>
            <person name="Choisne N."/>
            <person name="Claudel-Renard C."/>
            <person name="Cunnac S."/>
            <person name="Demange N."/>
            <person name="Gaspin C."/>
            <person name="Lavie M."/>
            <person name="Moisan A."/>
            <person name="Robert C."/>
            <person name="Saurin W."/>
            <person name="Schiex T."/>
            <person name="Siguier P."/>
            <person name="Thebault P."/>
            <person name="Whalen M."/>
            <person name="Wincker P."/>
            <person name="Levy M."/>
            <person name="Weissenbach J."/>
            <person name="Boucher C.A."/>
        </authorList>
    </citation>
    <scope>NUCLEOTIDE SEQUENCE [LARGE SCALE GENOMIC DNA]</scope>
    <source>
        <strain>ATCC BAA-1114 / GMI1000</strain>
    </source>
</reference>
<accession>Q8XZK5</accession>
<proteinExistence type="inferred from homology"/>
<sequence length="383" mass="41093">MSPTLALTEDLIRRRSVTPEDKGCQDVLIERLSAAGFQCETVVSGPDHFRVTNLWAVKRGRAGTDGKLLVFAGHTDVVPTGPVEQWRSDPFEPTHRDGKLYGRGAADMKTSIAGFVVAAEEFVAVHPDHAGSIGFLITSDEEGPAHDGTIKVCDLLRTRGERLDYCVVGEPTSVSTLGDMVKNGRRGSLSGKLTVNGVQGHIAYPHLAKNPIHLAVPALTALAAEQWDDGNAYFPPTTWQMSNIHGGTGATNVIPGHVIIDFNFRFSTASTPEGLKSRVHAILDAHGLDYTLAWTLGGEPFLTERGELSEALSSAIGAECGVATELSTTGGTSDGRFIAKLCPQVIEFGPPNASIHKIDEHVDVAFIEPLKNVYRRVLETLIA</sequence>
<keyword id="KW-0028">Amino-acid biosynthesis</keyword>
<keyword id="KW-0170">Cobalt</keyword>
<keyword id="KW-0220">Diaminopimelate biosynthesis</keyword>
<keyword id="KW-0378">Hydrolase</keyword>
<keyword id="KW-0457">Lysine biosynthesis</keyword>
<keyword id="KW-0479">Metal-binding</keyword>
<keyword id="KW-1185">Reference proteome</keyword>
<keyword id="KW-0862">Zinc</keyword>
<comment type="function">
    <text evidence="1">Catalyzes the hydrolysis of N-succinyl-L,L-diaminopimelic acid (SDAP), forming succinate and LL-2,6-diaminopimelate (DAP), an intermediate involved in the bacterial biosynthesis of lysine and meso-diaminopimelic acid, an essential component of bacterial cell walls.</text>
</comment>
<comment type="catalytic activity">
    <reaction evidence="1">
        <text>N-succinyl-(2S,6S)-2,6-diaminopimelate + H2O = (2S,6S)-2,6-diaminopimelate + succinate</text>
        <dbReference type="Rhea" id="RHEA:22608"/>
        <dbReference type="ChEBI" id="CHEBI:15377"/>
        <dbReference type="ChEBI" id="CHEBI:30031"/>
        <dbReference type="ChEBI" id="CHEBI:57609"/>
        <dbReference type="ChEBI" id="CHEBI:58087"/>
        <dbReference type="EC" id="3.5.1.18"/>
    </reaction>
</comment>
<comment type="cofactor">
    <cofactor evidence="1">
        <name>Zn(2+)</name>
        <dbReference type="ChEBI" id="CHEBI:29105"/>
    </cofactor>
    <cofactor evidence="1">
        <name>Co(2+)</name>
        <dbReference type="ChEBI" id="CHEBI:48828"/>
    </cofactor>
    <text evidence="1">Binds 2 Zn(2+) or Co(2+) ions per subunit.</text>
</comment>
<comment type="pathway">
    <text evidence="1">Amino-acid biosynthesis; L-lysine biosynthesis via DAP pathway; LL-2,6-diaminopimelate from (S)-tetrahydrodipicolinate (succinylase route): step 3/3.</text>
</comment>
<comment type="subunit">
    <text evidence="1">Homodimer.</text>
</comment>
<comment type="similarity">
    <text evidence="1">Belongs to the peptidase M20A family. DapE subfamily.</text>
</comment>
<comment type="sequence caution" evidence="2">
    <conflict type="erroneous initiation">
        <sequence resource="EMBL-CDS" id="CAD15092"/>
    </conflict>
</comment>
<dbReference type="EC" id="3.5.1.18" evidence="1"/>
<dbReference type="EMBL" id="AL646052">
    <property type="protein sequence ID" value="CAD15092.1"/>
    <property type="status" value="ALT_INIT"/>
    <property type="molecule type" value="Genomic_DNA"/>
</dbReference>
<dbReference type="RefSeq" id="WP_028853019.1">
    <property type="nucleotide sequence ID" value="NC_003295.1"/>
</dbReference>
<dbReference type="SMR" id="Q8XZK5"/>
<dbReference type="STRING" id="267608.RSc1390"/>
<dbReference type="EnsemblBacteria" id="CAD15092">
    <property type="protein sequence ID" value="CAD15092"/>
    <property type="gene ID" value="RSc1390"/>
</dbReference>
<dbReference type="KEGG" id="rso:RSc1390"/>
<dbReference type="eggNOG" id="COG0624">
    <property type="taxonomic scope" value="Bacteria"/>
</dbReference>
<dbReference type="HOGENOM" id="CLU_021802_4_0_4"/>
<dbReference type="UniPathway" id="UPA00034">
    <property type="reaction ID" value="UER00021"/>
</dbReference>
<dbReference type="Proteomes" id="UP000001436">
    <property type="component" value="Chromosome"/>
</dbReference>
<dbReference type="GO" id="GO:0008777">
    <property type="term" value="F:acetylornithine deacetylase activity"/>
    <property type="evidence" value="ECO:0007669"/>
    <property type="project" value="TreeGrafter"/>
</dbReference>
<dbReference type="GO" id="GO:0050897">
    <property type="term" value="F:cobalt ion binding"/>
    <property type="evidence" value="ECO:0007669"/>
    <property type="project" value="UniProtKB-UniRule"/>
</dbReference>
<dbReference type="GO" id="GO:0009014">
    <property type="term" value="F:succinyl-diaminopimelate desuccinylase activity"/>
    <property type="evidence" value="ECO:0007669"/>
    <property type="project" value="UniProtKB-UniRule"/>
</dbReference>
<dbReference type="GO" id="GO:0008270">
    <property type="term" value="F:zinc ion binding"/>
    <property type="evidence" value="ECO:0007669"/>
    <property type="project" value="UniProtKB-UniRule"/>
</dbReference>
<dbReference type="GO" id="GO:0019877">
    <property type="term" value="P:diaminopimelate biosynthetic process"/>
    <property type="evidence" value="ECO:0007669"/>
    <property type="project" value="UniProtKB-UniRule"/>
</dbReference>
<dbReference type="GO" id="GO:0006526">
    <property type="term" value="P:L-arginine biosynthetic process"/>
    <property type="evidence" value="ECO:0007669"/>
    <property type="project" value="TreeGrafter"/>
</dbReference>
<dbReference type="GO" id="GO:0009089">
    <property type="term" value="P:lysine biosynthetic process via diaminopimelate"/>
    <property type="evidence" value="ECO:0007669"/>
    <property type="project" value="UniProtKB-UniRule"/>
</dbReference>
<dbReference type="CDD" id="cd03891">
    <property type="entry name" value="M20_DapE_proteobac"/>
    <property type="match status" value="1"/>
</dbReference>
<dbReference type="FunFam" id="3.30.70.360:FF:000011">
    <property type="entry name" value="Succinyl-diaminopimelate desuccinylase"/>
    <property type="match status" value="1"/>
</dbReference>
<dbReference type="FunFam" id="3.40.630.10:FF:000005">
    <property type="entry name" value="Succinyl-diaminopimelate desuccinylase"/>
    <property type="match status" value="1"/>
</dbReference>
<dbReference type="Gene3D" id="3.40.630.10">
    <property type="entry name" value="Zn peptidases"/>
    <property type="match status" value="2"/>
</dbReference>
<dbReference type="HAMAP" id="MF_01690">
    <property type="entry name" value="DapE"/>
    <property type="match status" value="1"/>
</dbReference>
<dbReference type="InterPro" id="IPR036264">
    <property type="entry name" value="Bact_exopeptidase_dim_dom"/>
</dbReference>
<dbReference type="InterPro" id="IPR005941">
    <property type="entry name" value="DapE_proteobac"/>
</dbReference>
<dbReference type="InterPro" id="IPR002933">
    <property type="entry name" value="Peptidase_M20"/>
</dbReference>
<dbReference type="InterPro" id="IPR011650">
    <property type="entry name" value="Peptidase_M20_dimer"/>
</dbReference>
<dbReference type="InterPro" id="IPR050072">
    <property type="entry name" value="Peptidase_M20A"/>
</dbReference>
<dbReference type="NCBIfam" id="TIGR01246">
    <property type="entry name" value="dapE_proteo"/>
    <property type="match status" value="1"/>
</dbReference>
<dbReference type="NCBIfam" id="NF009557">
    <property type="entry name" value="PRK13009.1"/>
    <property type="match status" value="1"/>
</dbReference>
<dbReference type="PANTHER" id="PTHR43808">
    <property type="entry name" value="ACETYLORNITHINE DEACETYLASE"/>
    <property type="match status" value="1"/>
</dbReference>
<dbReference type="PANTHER" id="PTHR43808:SF31">
    <property type="entry name" value="N-ACETYL-L-CITRULLINE DEACETYLASE"/>
    <property type="match status" value="1"/>
</dbReference>
<dbReference type="Pfam" id="PF07687">
    <property type="entry name" value="M20_dimer"/>
    <property type="match status" value="1"/>
</dbReference>
<dbReference type="Pfam" id="PF01546">
    <property type="entry name" value="Peptidase_M20"/>
    <property type="match status" value="1"/>
</dbReference>
<dbReference type="SUPFAM" id="SSF55031">
    <property type="entry name" value="Bacterial exopeptidase dimerisation domain"/>
    <property type="match status" value="1"/>
</dbReference>
<dbReference type="SUPFAM" id="SSF53187">
    <property type="entry name" value="Zn-dependent exopeptidases"/>
    <property type="match status" value="1"/>
</dbReference>
<protein>
    <recommendedName>
        <fullName evidence="1">Succinyl-diaminopimelate desuccinylase</fullName>
        <shortName evidence="1">SDAP desuccinylase</shortName>
        <ecNumber evidence="1">3.5.1.18</ecNumber>
    </recommendedName>
    <alternativeName>
        <fullName evidence="1">N-succinyl-LL-2,6-diaminoheptanedioate amidohydrolase</fullName>
    </alternativeName>
</protein>